<feature type="chain" id="PRO_0000190967" description="Guanylate-binding protein 2">
    <location>
        <begin position="1"/>
        <end position="586"/>
    </location>
</feature>
<feature type="propeptide" id="PRO_0000370784" description="Removed in mature form" evidence="5">
    <location>
        <begin position="587"/>
        <end position="589"/>
    </location>
</feature>
<feature type="domain" description="GB1/RHD3-type G" evidence="6">
    <location>
        <begin position="35"/>
        <end position="276"/>
    </location>
</feature>
<feature type="region of interest" description="GTPase domain (Globular)" evidence="1">
    <location>
        <begin position="1"/>
        <end position="309"/>
    </location>
</feature>
<feature type="binding site" evidence="3">
    <location>
        <begin position="45"/>
        <end position="52"/>
    </location>
    <ligand>
        <name>GTP</name>
        <dbReference type="ChEBI" id="CHEBI:37565"/>
    </ligand>
</feature>
<feature type="binding site" evidence="3">
    <location>
        <begin position="181"/>
        <end position="182"/>
    </location>
    <ligand>
        <name>GTP</name>
        <dbReference type="ChEBI" id="CHEBI:37565"/>
    </ligand>
</feature>
<feature type="binding site" evidence="3">
    <location>
        <position position="245"/>
    </location>
    <ligand>
        <name>GTP</name>
        <dbReference type="ChEBI" id="CHEBI:37565"/>
    </ligand>
</feature>
<feature type="modified residue" description="Cysteine methyl ester" evidence="9">
    <location>
        <position position="586"/>
    </location>
</feature>
<feature type="lipid moiety-binding region" description="S-geranylgeranyl cysteine" evidence="7">
    <location>
        <position position="586"/>
    </location>
</feature>
<proteinExistence type="evidence at protein level"/>
<accession>Q63663</accession>
<dbReference type="EC" id="3.6.5.-" evidence="2"/>
<dbReference type="EMBL" id="M80367">
    <property type="protein sequence ID" value="AAA19909.1"/>
    <property type="status" value="ALT_INIT"/>
    <property type="molecule type" value="mRNA"/>
</dbReference>
<dbReference type="PIR" id="S43506">
    <property type="entry name" value="S43506"/>
</dbReference>
<dbReference type="RefSeq" id="NP_598308.1">
    <property type="nucleotide sequence ID" value="NM_133624.2"/>
</dbReference>
<dbReference type="SMR" id="Q63663"/>
<dbReference type="BioGRID" id="251165">
    <property type="interactions" value="1"/>
</dbReference>
<dbReference type="FunCoup" id="Q63663">
    <property type="interactions" value="231"/>
</dbReference>
<dbReference type="STRING" id="10116.ENSRNOP00000061437"/>
<dbReference type="iPTMnet" id="Q63663"/>
<dbReference type="PhosphoSitePlus" id="Q63663"/>
<dbReference type="PaxDb" id="10116-ENSRNOP00000061437"/>
<dbReference type="GeneID" id="171164"/>
<dbReference type="KEGG" id="rno:171164"/>
<dbReference type="AGR" id="RGD:621810"/>
<dbReference type="CTD" id="2634"/>
<dbReference type="RGD" id="621810">
    <property type="gene designation" value="Gbp2"/>
</dbReference>
<dbReference type="eggNOG" id="KOG2037">
    <property type="taxonomic scope" value="Eukaryota"/>
</dbReference>
<dbReference type="InParanoid" id="Q63663"/>
<dbReference type="OrthoDB" id="2135133at2759"/>
<dbReference type="PRO" id="PR:Q63663"/>
<dbReference type="Proteomes" id="UP000002494">
    <property type="component" value="Unplaced"/>
</dbReference>
<dbReference type="GO" id="GO:0005737">
    <property type="term" value="C:cytoplasm"/>
    <property type="evidence" value="ECO:0000266"/>
    <property type="project" value="RGD"/>
</dbReference>
<dbReference type="GO" id="GO:0031410">
    <property type="term" value="C:cytoplasmic vesicle"/>
    <property type="evidence" value="ECO:0000250"/>
    <property type="project" value="UniProtKB"/>
</dbReference>
<dbReference type="GO" id="GO:0030659">
    <property type="term" value="C:cytoplasmic vesicle membrane"/>
    <property type="evidence" value="ECO:0007669"/>
    <property type="project" value="UniProtKB-SubCell"/>
</dbReference>
<dbReference type="GO" id="GO:0005794">
    <property type="term" value="C:Golgi apparatus"/>
    <property type="evidence" value="ECO:0000250"/>
    <property type="project" value="UniProtKB"/>
</dbReference>
<dbReference type="GO" id="GO:0000139">
    <property type="term" value="C:Golgi membrane"/>
    <property type="evidence" value="ECO:0000266"/>
    <property type="project" value="RGD"/>
</dbReference>
<dbReference type="GO" id="GO:0005634">
    <property type="term" value="C:nucleus"/>
    <property type="evidence" value="ECO:0000266"/>
    <property type="project" value="RGD"/>
</dbReference>
<dbReference type="GO" id="GO:0048471">
    <property type="term" value="C:perinuclear region of cytoplasm"/>
    <property type="evidence" value="ECO:0000266"/>
    <property type="project" value="RGD"/>
</dbReference>
<dbReference type="GO" id="GO:0106139">
    <property type="term" value="C:symbiont cell surface"/>
    <property type="evidence" value="ECO:0000266"/>
    <property type="project" value="RGD"/>
</dbReference>
<dbReference type="GO" id="GO:0004866">
    <property type="term" value="F:endopeptidase inhibitor activity"/>
    <property type="evidence" value="ECO:0000266"/>
    <property type="project" value="RGD"/>
</dbReference>
<dbReference type="GO" id="GO:0005525">
    <property type="term" value="F:GTP binding"/>
    <property type="evidence" value="ECO:0000318"/>
    <property type="project" value="GO_Central"/>
</dbReference>
<dbReference type="GO" id="GO:0003924">
    <property type="term" value="F:GTPase activity"/>
    <property type="evidence" value="ECO:0000318"/>
    <property type="project" value="GO_Central"/>
</dbReference>
<dbReference type="GO" id="GO:0042802">
    <property type="term" value="F:identical protein binding"/>
    <property type="evidence" value="ECO:0000266"/>
    <property type="project" value="RGD"/>
</dbReference>
<dbReference type="GO" id="GO:0140678">
    <property type="term" value="F:molecular function inhibitor activity"/>
    <property type="evidence" value="ECO:0000266"/>
    <property type="project" value="RGD"/>
</dbReference>
<dbReference type="GO" id="GO:0042803">
    <property type="term" value="F:protein homodimerization activity"/>
    <property type="evidence" value="ECO:0000266"/>
    <property type="project" value="RGD"/>
</dbReference>
<dbReference type="GO" id="GO:0002218">
    <property type="term" value="P:activation of innate immune response"/>
    <property type="evidence" value="ECO:0000250"/>
    <property type="project" value="UniProtKB"/>
</dbReference>
<dbReference type="GO" id="GO:0044406">
    <property type="term" value="P:adhesion of symbiont to host"/>
    <property type="evidence" value="ECO:0000266"/>
    <property type="project" value="RGD"/>
</dbReference>
<dbReference type="GO" id="GO:0035458">
    <property type="term" value="P:cellular response to interferon-beta"/>
    <property type="evidence" value="ECO:0000266"/>
    <property type="project" value="RGD"/>
</dbReference>
<dbReference type="GO" id="GO:0071347">
    <property type="term" value="P:cellular response to interleukin-1"/>
    <property type="evidence" value="ECO:0000266"/>
    <property type="project" value="RGD"/>
</dbReference>
<dbReference type="GO" id="GO:0071222">
    <property type="term" value="P:cellular response to lipopolysaccharide"/>
    <property type="evidence" value="ECO:0000250"/>
    <property type="project" value="UniProtKB"/>
</dbReference>
<dbReference type="GO" id="GO:0071356">
    <property type="term" value="P:cellular response to tumor necrosis factor"/>
    <property type="evidence" value="ECO:0000266"/>
    <property type="project" value="RGD"/>
</dbReference>
<dbReference type="GO" id="GO:0071346">
    <property type="term" value="P:cellular response to type II interferon"/>
    <property type="evidence" value="ECO:0000266"/>
    <property type="project" value="RGD"/>
</dbReference>
<dbReference type="GO" id="GO:0051715">
    <property type="term" value="P:cytolysis in another organism"/>
    <property type="evidence" value="ECO:0000250"/>
    <property type="project" value="UniProtKB"/>
</dbReference>
<dbReference type="GO" id="GO:0042742">
    <property type="term" value="P:defense response to bacterium"/>
    <property type="evidence" value="ECO:0000250"/>
    <property type="project" value="UniProtKB"/>
</dbReference>
<dbReference type="GO" id="GO:0050830">
    <property type="term" value="P:defense response to Gram-positive bacterium"/>
    <property type="evidence" value="ECO:0000266"/>
    <property type="project" value="RGD"/>
</dbReference>
<dbReference type="GO" id="GO:0042832">
    <property type="term" value="P:defense response to protozoan"/>
    <property type="evidence" value="ECO:0000266"/>
    <property type="project" value="RGD"/>
</dbReference>
<dbReference type="GO" id="GO:0051607">
    <property type="term" value="P:defense response to virus"/>
    <property type="evidence" value="ECO:0000250"/>
    <property type="project" value="UniProtKB"/>
</dbReference>
<dbReference type="GO" id="GO:0140973">
    <property type="term" value="P:positive regulation of AIM2 inflammasome complex assembly"/>
    <property type="evidence" value="ECO:0000250"/>
    <property type="project" value="UniProtKB"/>
</dbReference>
<dbReference type="GO" id="GO:0140639">
    <property type="term" value="P:positive regulation of pyroptotic inflammatory response"/>
    <property type="evidence" value="ECO:0000250"/>
    <property type="project" value="UniProtKB"/>
</dbReference>
<dbReference type="GO" id="GO:0034504">
    <property type="term" value="P:protein localization to nucleus"/>
    <property type="evidence" value="ECO:0000266"/>
    <property type="project" value="RGD"/>
</dbReference>
<dbReference type="GO" id="GO:0006605">
    <property type="term" value="P:protein targeting"/>
    <property type="evidence" value="ECO:0000266"/>
    <property type="project" value="RGD"/>
</dbReference>
<dbReference type="GO" id="GO:0009617">
    <property type="term" value="P:response to bacterium"/>
    <property type="evidence" value="ECO:0000266"/>
    <property type="project" value="RGD"/>
</dbReference>
<dbReference type="CDD" id="cd01851">
    <property type="entry name" value="GBP"/>
    <property type="match status" value="1"/>
</dbReference>
<dbReference type="CDD" id="cd16269">
    <property type="entry name" value="GBP_C"/>
    <property type="match status" value="1"/>
</dbReference>
<dbReference type="FunFam" id="1.20.1000.10:FF:000001">
    <property type="entry name" value="Guanylate binding protein 1"/>
    <property type="match status" value="1"/>
</dbReference>
<dbReference type="FunFam" id="3.40.50.300:FF:000422">
    <property type="entry name" value="Guanylate-binding protein 1"/>
    <property type="match status" value="1"/>
</dbReference>
<dbReference type="Gene3D" id="1.20.1000.10">
    <property type="entry name" value="Guanylate-binding protein, C-terminal domain"/>
    <property type="match status" value="1"/>
</dbReference>
<dbReference type="Gene3D" id="3.40.50.300">
    <property type="entry name" value="P-loop containing nucleotide triphosphate hydrolases"/>
    <property type="match status" value="1"/>
</dbReference>
<dbReference type="InterPro" id="IPR030386">
    <property type="entry name" value="G_GB1_RHD3_dom"/>
</dbReference>
<dbReference type="InterPro" id="IPR037684">
    <property type="entry name" value="GBP_C"/>
</dbReference>
<dbReference type="InterPro" id="IPR003191">
    <property type="entry name" value="Guanylate-bd/ATL_C"/>
</dbReference>
<dbReference type="InterPro" id="IPR036543">
    <property type="entry name" value="Guanylate-bd_C_sf"/>
</dbReference>
<dbReference type="InterPro" id="IPR015894">
    <property type="entry name" value="Guanylate-bd_N"/>
</dbReference>
<dbReference type="InterPro" id="IPR027417">
    <property type="entry name" value="P-loop_NTPase"/>
</dbReference>
<dbReference type="PANTHER" id="PTHR10751">
    <property type="entry name" value="GUANYLATE BINDING PROTEIN"/>
    <property type="match status" value="1"/>
</dbReference>
<dbReference type="Pfam" id="PF02263">
    <property type="entry name" value="GBP"/>
    <property type="match status" value="1"/>
</dbReference>
<dbReference type="Pfam" id="PF02841">
    <property type="entry name" value="GBP_C"/>
    <property type="match status" value="1"/>
</dbReference>
<dbReference type="SUPFAM" id="SSF48340">
    <property type="entry name" value="Interferon-induced guanylate-binding protein 1 (GBP1), C-terminal domain"/>
    <property type="match status" value="1"/>
</dbReference>
<dbReference type="SUPFAM" id="SSF52540">
    <property type="entry name" value="P-loop containing nucleoside triphosphate hydrolases"/>
    <property type="match status" value="1"/>
</dbReference>
<dbReference type="PROSITE" id="PS51715">
    <property type="entry name" value="G_GB1_RHD3"/>
    <property type="match status" value="1"/>
</dbReference>
<sequence>MASEIHMLQPMCLIENTEAHLVINQEALRILSAINQPVVVVAIVGLYRTGKSYLMNKLAGKRTGFSLGSTVQSHTKGIWMWCVPHPKKAGQTLVLLDTEGLEDVEKGDNQNDCWIFALAVLLSSTFVYNSMGTINQQAMDQLHYVTELTDLIKSKSSPDQSGIDDSANFVGFFPTFVWALRDFSLELEVNGKLVTPDEYLEHSLTLKKGADKKTKSFNEPRLCIRKFFPKRKCFIFDRPALRKQLCKLETLGEEELCSEFVEQVAEFTSYIFSYSAVKTLSGGIIVNGPRLKSLVQTYVGAISSGSLPCMESAVLTLAQIENSAAVQKAITHYEEQMNQKIQMPTETLQELLDLHRLIEREAIEIFLKNSFKDVDQKFQTELGNLLISKRDAFIKKNSDVSSAHCSDLIEDIFGPLEEEVKQGTFSKPGGYFLFLQMRQELEKKYNQAPGKGLEAEAVLKKYFESKEDIVETLLKTDQSLTEAAKEIEVERIKAETAEAANRELAEKQEKFELMMQQKEESYQEHVRQLTEKMKEEQKKLIEEQDNIIALKLREQEKFLREGYENESKKLLREIENMKRRQSPGKCTIL</sequence>
<reference key="1">
    <citation type="journal article" date="1994" name="Biochim. Biophys. Acta">
        <title>Molecular cloning and characterization of an isoprenylated 67 kDa protein.</title>
        <authorList>
            <person name="Asundi V.K."/>
            <person name="Stahl R.C."/>
            <person name="Showalter L."/>
            <person name="Conner K.J."/>
            <person name="Carey D.J."/>
        </authorList>
    </citation>
    <scope>NUCLEOTIDE SEQUENCE [MRNA]</scope>
    <scope>TISSUE SPECIFICITY</scope>
    <scope>ISOPRENYLATION AT CYS-586</scope>
    <scope>METHYLATION AT CYS-586</scope>
</reference>
<name>GBP2_RAT</name>
<keyword id="KW-0929">Antimicrobial</keyword>
<keyword id="KW-0963">Cytoplasm</keyword>
<keyword id="KW-0968">Cytoplasmic vesicle</keyword>
<keyword id="KW-0333">Golgi apparatus</keyword>
<keyword id="KW-0342">GTP-binding</keyword>
<keyword id="KW-0378">Hydrolase</keyword>
<keyword id="KW-0391">Immunity</keyword>
<keyword id="KW-0399">Innate immunity</keyword>
<keyword id="KW-0449">Lipoprotein</keyword>
<keyword id="KW-0472">Membrane</keyword>
<keyword id="KW-0488">Methylation</keyword>
<keyword id="KW-0547">Nucleotide-binding</keyword>
<keyword id="KW-0636">Prenylation</keyword>
<keyword id="KW-1185">Reference proteome</keyword>
<comment type="function">
    <text evidence="2 4">Interferon (IFN)-inducible GTPase that plays important roles in innate immunity against a diverse range of bacterial, viral and protozoan pathogens (By similarity). Hydrolyzes GTP to GMP in 2 consecutive cleavage reactions, but the major reaction product is GDP (By similarity). Following infection, recruited to the pathogen-containing vacuoles or vacuole-escaped bacteria and acts as a positive regulator of inflammasome assembly by promoting the release of inflammasome ligands from bacteria. Acts by promoting lysis of pathogen-containing vacuoles, releasing pathogens into the cytosol. Following pathogen release in the cytosol, promotes recruitment of proteins that mediate bacterial cytolysis: this liberates ligands that are detected by inflammasomes, such as lipopolysaccharide (LPS) that activates the non-canonical CASP4/CASP11 inflammasome or double-stranded DNA (dsDNA) that activates the AIM2 inflammasome. Confers protection to the protozoan pathogen Toxoplasma gondii (By similarity). Independently of its GTPase activity, acts as an inhibitor of various viruses infectivity by inhibiting FURIN-mediated maturation of viral envelope proteins (By similarity).</text>
</comment>
<comment type="catalytic activity">
    <reaction evidence="2">
        <text>GTP + H2O = GDP + phosphate + H(+)</text>
        <dbReference type="Rhea" id="RHEA:19669"/>
        <dbReference type="ChEBI" id="CHEBI:15377"/>
        <dbReference type="ChEBI" id="CHEBI:15378"/>
        <dbReference type="ChEBI" id="CHEBI:37565"/>
        <dbReference type="ChEBI" id="CHEBI:43474"/>
        <dbReference type="ChEBI" id="CHEBI:58189"/>
    </reaction>
</comment>
<comment type="subunit">
    <text evidence="2">Homodimer; homodimerization occurs upon GTP-binding and is required for the association with membranous structures. Heterodimer with other family members, including GBP1, GBP3, GBP4 and GBP5.</text>
</comment>
<comment type="subcellular location">
    <subcellularLocation>
        <location evidence="4">Cytoplasmic vesicle membrane</location>
        <topology evidence="2">Lipid-anchor</topology>
    </subcellularLocation>
    <subcellularLocation>
        <location evidence="2">Golgi apparatus membrane</location>
        <topology evidence="2">Lipid-anchor</topology>
    </subcellularLocation>
    <subcellularLocation>
        <location evidence="2">Cytoplasm</location>
    </subcellularLocation>
    <subcellularLocation>
        <location evidence="2">Cytoplasm</location>
        <location evidence="2">Perinuclear region</location>
    </subcellularLocation>
    <text evidence="2">GBP2-GBP5 dimers localize to the Golgi apparatus.</text>
</comment>
<comment type="tissue specificity">
    <text evidence="7">Widely expressed.</text>
</comment>
<comment type="induction">
    <text>By IFNG.</text>
</comment>
<comment type="PTM">
    <text evidence="2">Isoprenylation is required for proper subcellular location.</text>
</comment>
<comment type="similarity">
    <text evidence="6">Belongs to the TRAFAC class dynamin-like GTPase superfamily. GB1/RHD3 GTPase family. GB1 subfamily.</text>
</comment>
<comment type="sequence caution" evidence="8">
    <conflict type="erroneous initiation">
        <sequence resource="EMBL-CDS" id="AAA19909"/>
    </conflict>
    <text>Extended N-terminus.</text>
</comment>
<evidence type="ECO:0000250" key="1">
    <source>
        <dbReference type="UniProtKB" id="P32455"/>
    </source>
</evidence>
<evidence type="ECO:0000250" key="2">
    <source>
        <dbReference type="UniProtKB" id="P32456"/>
    </source>
</evidence>
<evidence type="ECO:0000250" key="3">
    <source>
        <dbReference type="UniProtKB" id="Q96PP8"/>
    </source>
</evidence>
<evidence type="ECO:0000250" key="4">
    <source>
        <dbReference type="UniProtKB" id="Q9Z0E6"/>
    </source>
</evidence>
<evidence type="ECO:0000255" key="5"/>
<evidence type="ECO:0000255" key="6">
    <source>
        <dbReference type="PROSITE-ProRule" id="PRU01052"/>
    </source>
</evidence>
<evidence type="ECO:0000269" key="7">
    <source>
    </source>
</evidence>
<evidence type="ECO:0000305" key="8"/>
<evidence type="ECO:0000305" key="9">
    <source>
    </source>
</evidence>
<organism>
    <name type="scientific">Rattus norvegicus</name>
    <name type="common">Rat</name>
    <dbReference type="NCBI Taxonomy" id="10116"/>
    <lineage>
        <taxon>Eukaryota</taxon>
        <taxon>Metazoa</taxon>
        <taxon>Chordata</taxon>
        <taxon>Craniata</taxon>
        <taxon>Vertebrata</taxon>
        <taxon>Euteleostomi</taxon>
        <taxon>Mammalia</taxon>
        <taxon>Eutheria</taxon>
        <taxon>Euarchontoglires</taxon>
        <taxon>Glires</taxon>
        <taxon>Rodentia</taxon>
        <taxon>Myomorpha</taxon>
        <taxon>Muroidea</taxon>
        <taxon>Muridae</taxon>
        <taxon>Murinae</taxon>
        <taxon>Rattus</taxon>
    </lineage>
</organism>
<protein>
    <recommendedName>
        <fullName>Guanylate-binding protein 2</fullName>
        <ecNumber evidence="2">3.6.5.-</ecNumber>
    </recommendedName>
    <alternativeName>
        <fullName>GTP-binding protein 2</fullName>
        <shortName>GBP-2</shortName>
    </alternativeName>
    <alternativeName>
        <fullName>Guanine nucleotide-binding protein 2</fullName>
    </alternativeName>
    <alternativeName>
        <fullName>Interferon-induced guanylate-binding protein 2</fullName>
    </alternativeName>
    <alternativeName>
        <fullName>p67</fullName>
    </alternativeName>
</protein>
<gene>
    <name type="primary">Gbp2</name>
</gene>